<sequence length="370" mass="41300">MSLSRLSVTGVRNLHPVTLSPSPRINILFGDNGSGKTSLLEAIHLLGLARSFRSIRLNPVITYEQPACTVFGQVELPDQHSRALGVSRDRSGEVRIRIDGQSVRSAAELADTLPLQLINPDSFRLLEGAPKLRRQFLDWGVFHVEHRFMSAWQRLQQALRQRNSWLRHGTLDSASDAAWSRELSLASDEIDGYRRAYIQALKPVFETTLKALLDLDGLTLSYYRGWDKDRPLVDVLASSLERDRAMGHTQSGPQRADLRLKVGSHNAAEVLSRGQQKLVVCALRIAQGHLVSEAKRGQCIYLVDDLPSELDAQHRLALCRLLEQLNCQVFITCVDSTVLQEGWGEQTPVSMFHVEHGQITQLHGPSGVKA</sequence>
<feature type="chain" id="PRO_1000048560" description="DNA replication and repair protein RecF">
    <location>
        <begin position="1"/>
        <end position="370"/>
    </location>
</feature>
<feature type="binding site" evidence="1">
    <location>
        <begin position="30"/>
        <end position="37"/>
    </location>
    <ligand>
        <name>ATP</name>
        <dbReference type="ChEBI" id="CHEBI:30616"/>
    </ligand>
</feature>
<gene>
    <name evidence="1" type="primary">recF</name>
    <name type="ordered locus">PST_0003</name>
</gene>
<organism>
    <name type="scientific">Stutzerimonas stutzeri (strain A1501)</name>
    <name type="common">Pseudomonas stutzeri</name>
    <dbReference type="NCBI Taxonomy" id="379731"/>
    <lineage>
        <taxon>Bacteria</taxon>
        <taxon>Pseudomonadati</taxon>
        <taxon>Pseudomonadota</taxon>
        <taxon>Gammaproteobacteria</taxon>
        <taxon>Pseudomonadales</taxon>
        <taxon>Pseudomonadaceae</taxon>
        <taxon>Stutzerimonas</taxon>
    </lineage>
</organism>
<protein>
    <recommendedName>
        <fullName evidence="1">DNA replication and repair protein RecF</fullName>
    </recommendedName>
</protein>
<proteinExistence type="inferred from homology"/>
<comment type="function">
    <text evidence="1">The RecF protein is involved in DNA metabolism; it is required for DNA replication and normal SOS inducibility. RecF binds preferentially to single-stranded, linear DNA. It also seems to bind ATP.</text>
</comment>
<comment type="subcellular location">
    <subcellularLocation>
        <location evidence="1">Cytoplasm</location>
    </subcellularLocation>
</comment>
<comment type="similarity">
    <text evidence="1">Belongs to the RecF family.</text>
</comment>
<reference key="1">
    <citation type="journal article" date="2008" name="Proc. Natl. Acad. Sci. U.S.A.">
        <title>Nitrogen fixation island and rhizosphere competence traits in the genome of root-associated Pseudomonas stutzeri A1501.</title>
        <authorList>
            <person name="Yan Y."/>
            <person name="Yang J."/>
            <person name="Dou Y."/>
            <person name="Chen M."/>
            <person name="Ping S."/>
            <person name="Peng J."/>
            <person name="Lu W."/>
            <person name="Zhang W."/>
            <person name="Yao Z."/>
            <person name="Li H."/>
            <person name="Liu W."/>
            <person name="He S."/>
            <person name="Geng L."/>
            <person name="Zhang X."/>
            <person name="Yang F."/>
            <person name="Yu H."/>
            <person name="Zhan Y."/>
            <person name="Li D."/>
            <person name="Lin Z."/>
            <person name="Wang Y."/>
            <person name="Elmerich C."/>
            <person name="Lin M."/>
            <person name="Jin Q."/>
        </authorList>
    </citation>
    <scope>NUCLEOTIDE SEQUENCE [LARGE SCALE GENOMIC DNA]</scope>
    <source>
        <strain>A1501</strain>
    </source>
</reference>
<keyword id="KW-0067">ATP-binding</keyword>
<keyword id="KW-0963">Cytoplasm</keyword>
<keyword id="KW-0227">DNA damage</keyword>
<keyword id="KW-0234">DNA repair</keyword>
<keyword id="KW-0235">DNA replication</keyword>
<keyword id="KW-0238">DNA-binding</keyword>
<keyword id="KW-0547">Nucleotide-binding</keyword>
<keyword id="KW-1185">Reference proteome</keyword>
<keyword id="KW-0742">SOS response</keyword>
<name>RECF_STUS1</name>
<dbReference type="EMBL" id="CP000304">
    <property type="protein sequence ID" value="ABP77711.1"/>
    <property type="molecule type" value="Genomic_DNA"/>
</dbReference>
<dbReference type="RefSeq" id="WP_011911254.1">
    <property type="nucleotide sequence ID" value="NC_009434.1"/>
</dbReference>
<dbReference type="SMR" id="A4VFG0"/>
<dbReference type="KEGG" id="psa:PST_0003"/>
<dbReference type="eggNOG" id="COG1195">
    <property type="taxonomic scope" value="Bacteria"/>
</dbReference>
<dbReference type="HOGENOM" id="CLU_040267_0_0_6"/>
<dbReference type="Proteomes" id="UP000000233">
    <property type="component" value="Chromosome"/>
</dbReference>
<dbReference type="GO" id="GO:0005737">
    <property type="term" value="C:cytoplasm"/>
    <property type="evidence" value="ECO:0007669"/>
    <property type="project" value="UniProtKB-SubCell"/>
</dbReference>
<dbReference type="GO" id="GO:0005524">
    <property type="term" value="F:ATP binding"/>
    <property type="evidence" value="ECO:0007669"/>
    <property type="project" value="UniProtKB-UniRule"/>
</dbReference>
<dbReference type="GO" id="GO:0003697">
    <property type="term" value="F:single-stranded DNA binding"/>
    <property type="evidence" value="ECO:0007669"/>
    <property type="project" value="UniProtKB-UniRule"/>
</dbReference>
<dbReference type="GO" id="GO:0006260">
    <property type="term" value="P:DNA replication"/>
    <property type="evidence" value="ECO:0007669"/>
    <property type="project" value="UniProtKB-UniRule"/>
</dbReference>
<dbReference type="GO" id="GO:0000731">
    <property type="term" value="P:DNA synthesis involved in DNA repair"/>
    <property type="evidence" value="ECO:0007669"/>
    <property type="project" value="TreeGrafter"/>
</dbReference>
<dbReference type="GO" id="GO:0006302">
    <property type="term" value="P:double-strand break repair"/>
    <property type="evidence" value="ECO:0007669"/>
    <property type="project" value="TreeGrafter"/>
</dbReference>
<dbReference type="GO" id="GO:0009432">
    <property type="term" value="P:SOS response"/>
    <property type="evidence" value="ECO:0007669"/>
    <property type="project" value="UniProtKB-UniRule"/>
</dbReference>
<dbReference type="Gene3D" id="3.40.50.300">
    <property type="entry name" value="P-loop containing nucleotide triphosphate hydrolases"/>
    <property type="match status" value="1"/>
</dbReference>
<dbReference type="Gene3D" id="1.20.1050.90">
    <property type="entry name" value="RecF/RecN/SMC, N-terminal domain"/>
    <property type="match status" value="1"/>
</dbReference>
<dbReference type="HAMAP" id="MF_00365">
    <property type="entry name" value="RecF"/>
    <property type="match status" value="1"/>
</dbReference>
<dbReference type="InterPro" id="IPR001238">
    <property type="entry name" value="DNA-binding_RecF"/>
</dbReference>
<dbReference type="InterPro" id="IPR018078">
    <property type="entry name" value="DNA-binding_RecF_CS"/>
</dbReference>
<dbReference type="InterPro" id="IPR027417">
    <property type="entry name" value="P-loop_NTPase"/>
</dbReference>
<dbReference type="InterPro" id="IPR003395">
    <property type="entry name" value="RecF/RecN/SMC_N"/>
</dbReference>
<dbReference type="InterPro" id="IPR042174">
    <property type="entry name" value="RecF_2"/>
</dbReference>
<dbReference type="NCBIfam" id="TIGR00611">
    <property type="entry name" value="recf"/>
    <property type="match status" value="1"/>
</dbReference>
<dbReference type="PANTHER" id="PTHR32182">
    <property type="entry name" value="DNA REPLICATION AND REPAIR PROTEIN RECF"/>
    <property type="match status" value="1"/>
</dbReference>
<dbReference type="PANTHER" id="PTHR32182:SF0">
    <property type="entry name" value="DNA REPLICATION AND REPAIR PROTEIN RECF"/>
    <property type="match status" value="1"/>
</dbReference>
<dbReference type="Pfam" id="PF02463">
    <property type="entry name" value="SMC_N"/>
    <property type="match status" value="1"/>
</dbReference>
<dbReference type="SUPFAM" id="SSF52540">
    <property type="entry name" value="P-loop containing nucleoside triphosphate hydrolases"/>
    <property type="match status" value="1"/>
</dbReference>
<dbReference type="PROSITE" id="PS00617">
    <property type="entry name" value="RECF_1"/>
    <property type="match status" value="1"/>
</dbReference>
<dbReference type="PROSITE" id="PS00618">
    <property type="entry name" value="RECF_2"/>
    <property type="match status" value="1"/>
</dbReference>
<evidence type="ECO:0000255" key="1">
    <source>
        <dbReference type="HAMAP-Rule" id="MF_00365"/>
    </source>
</evidence>
<accession>A4VFG0</accession>